<organism>
    <name type="scientific">Pogonomyrmex maricopa</name>
    <name type="common">Maricopa harvester ant</name>
    <dbReference type="NCBI Taxonomy" id="144040"/>
    <lineage>
        <taxon>Eukaryota</taxon>
        <taxon>Metazoa</taxon>
        <taxon>Ecdysozoa</taxon>
        <taxon>Arthropoda</taxon>
        <taxon>Hexapoda</taxon>
        <taxon>Insecta</taxon>
        <taxon>Pterygota</taxon>
        <taxon>Neoptera</taxon>
        <taxon>Endopterygota</taxon>
        <taxon>Hymenoptera</taxon>
        <taxon>Apocrita</taxon>
        <taxon>Aculeata</taxon>
        <taxon>Formicoidea</taxon>
        <taxon>Formicidae</taxon>
        <taxon>Myrmicinae</taxon>
        <taxon>Pogonomyrmex</taxon>
    </lineage>
</organism>
<dbReference type="EMBL" id="OR128459">
    <property type="protein sequence ID" value="WMI02497.1"/>
    <property type="molecule type" value="mRNA"/>
</dbReference>
<dbReference type="GO" id="GO:0005576">
    <property type="term" value="C:extracellular region"/>
    <property type="evidence" value="ECO:0007669"/>
    <property type="project" value="UniProtKB-SubCell"/>
</dbReference>
<dbReference type="GO" id="GO:0017080">
    <property type="term" value="F:sodium channel regulator activity"/>
    <property type="evidence" value="ECO:0007669"/>
    <property type="project" value="UniProtKB-KW"/>
</dbReference>
<dbReference type="GO" id="GO:0090729">
    <property type="term" value="F:toxin activity"/>
    <property type="evidence" value="ECO:0007669"/>
    <property type="project" value="UniProtKB-KW"/>
</dbReference>
<evidence type="ECO:0000255" key="1"/>
<evidence type="ECO:0000269" key="2">
    <source>
    </source>
</evidence>
<evidence type="ECO:0000303" key="3">
    <source>
    </source>
</evidence>
<evidence type="ECO:0000305" key="4"/>
<evidence type="ECO:0000305" key="5">
    <source>
    </source>
</evidence>
<keyword id="KW-0027">Amidation</keyword>
<keyword id="KW-0872">Ion channel impairing toxin</keyword>
<keyword id="KW-0528">Neurotoxin</keyword>
<keyword id="KW-0964">Secreted</keyword>
<keyword id="KW-0732">Signal</keyword>
<keyword id="KW-0800">Toxin</keyword>
<keyword id="KW-0738">Voltage-gated sodium channel impairing toxin</keyword>
<reference key="1">
    <citation type="journal article" date="2024" name="J. Biol. Chem.">
        <title>Peptide toxins that target vertebrate voltage-gated sodium channels underly the painful stings of harvester ants.</title>
        <authorList>
            <person name="Robinson S.D."/>
            <person name="Deuis J.R."/>
            <person name="Niu P."/>
            <person name="Touchard A."/>
            <person name="Mueller A."/>
            <person name="Schendel V."/>
            <person name="Brinkwirth N."/>
            <person name="King G.F."/>
            <person name="Vetter I."/>
            <person name="Schmidt J.O."/>
        </authorList>
    </citation>
    <scope>NUCLEOTIDE SEQUENCE [MRNA]</scope>
    <scope>IDENTIFICATION BY MASS SPECTROMETRY</scope>
    <scope>SUBCELLULAR LOCATION</scope>
    <scope>SYNTHESIS OF 62-88</scope>
    <scope>BIOASSAY</scope>
    <scope>AMIDATION AT ASN-88</scope>
    <source>
        <tissue>Venom</tissue>
        <tissue>Venom gland</tissue>
    </source>
</reference>
<name>TX2A_POGMA</name>
<comment type="function">
    <text evidence="2">Toxin that potently modulates mammalian voltage-gated sodium (Nav) channels, reducing the voltage threshold for activation and inhibiting channel inactivation. Shows activity on hNav1.6/SCN8A (EC(50)=176 nM), mNav1.7/SCN9A (EC(50)=102 nM) and hNav1.7 (EC(50)=154 nM). In vivo, causes spontaneous, gradual and long-lasting nocifensive behaviors by intraplantar injection in mice, as well as pronounced swelling of the injected paw. Does not have effect on insects (blowflies).</text>
</comment>
<comment type="subcellular location">
    <subcellularLocation>
        <location evidence="2">Secreted</location>
    </subcellularLocation>
</comment>
<comment type="tissue specificity">
    <text evidence="5">Expressed by the venom gland.</text>
</comment>
<comment type="miscellaneous">
    <text evidence="2">Negative results: shows low activity at hNav1.8/SCN10A (EC(50)=2.6 uM) and hNav1.9/SCN11A (EC(50)&lt;1 uM). Does not exhibit hemolytic and cytotoxic activities on HEK293 cells.</text>
</comment>
<comment type="similarity">
    <text evidence="4">Belongs to the formicidae venom clade 1 family.</text>
</comment>
<sequence length="89" mass="9433">MEIPKLLYIAVIAIGLSGSLTCATPLANPWGDPEAEANPEAKATAEATAEAIAEALAEPEPALPALPLLMFLFTLPALQHWIEKNWING</sequence>
<protein>
    <recommendedName>
        <fullName evidence="3">Myrmicitoxin(1)-Pm2a</fullName>
        <shortName evidence="3">MYRTX(1)-Pm2a</shortName>
    </recommendedName>
</protein>
<feature type="signal peptide" evidence="1">
    <location>
        <begin position="1"/>
        <end position="22"/>
    </location>
</feature>
<feature type="propeptide" id="PRO_0000461235" evidence="4">
    <location>
        <begin position="23"/>
        <end position="61"/>
    </location>
</feature>
<feature type="peptide" id="PRO_0000461236" description="Myrmicitoxin(1)-Pm2a" evidence="2">
    <location>
        <begin position="62"/>
        <end position="88"/>
    </location>
</feature>
<feature type="modified residue" description="Asparagine amide" evidence="2">
    <location>
        <position position="88"/>
    </location>
</feature>
<proteinExistence type="evidence at protein level"/>
<accession>P0DRD1</accession>